<protein>
    <recommendedName>
        <fullName evidence="1">Putative septation protein SpoVG</fullName>
    </recommendedName>
</protein>
<name>SP5G_CLOAB</name>
<sequence>MQITDVRIRKITSEGKMKAIVSVTFDNEFVVHDIKVIEGQNGLFIAMPSRKTPDGEFKDIAHPINTATREKIQSAILAEYEKVKNEEETKTETEE</sequence>
<comment type="function">
    <text evidence="1">Could be involved in septation.</text>
</comment>
<comment type="similarity">
    <text evidence="1">Belongs to the SpoVG family.</text>
</comment>
<accession>Q97E91</accession>
<reference key="1">
    <citation type="journal article" date="2001" name="J. Bacteriol.">
        <title>Genome sequence and comparative analysis of the solvent-producing bacterium Clostridium acetobutylicum.</title>
        <authorList>
            <person name="Noelling J."/>
            <person name="Breton G."/>
            <person name="Omelchenko M.V."/>
            <person name="Makarova K.S."/>
            <person name="Zeng Q."/>
            <person name="Gibson R."/>
            <person name="Lee H.M."/>
            <person name="Dubois J."/>
            <person name="Qiu D."/>
            <person name="Hitti J."/>
            <person name="Wolf Y.I."/>
            <person name="Tatusov R.L."/>
            <person name="Sabathe F."/>
            <person name="Doucette-Stamm L.A."/>
            <person name="Soucaille P."/>
            <person name="Daly M.J."/>
            <person name="Bennett G.N."/>
            <person name="Koonin E.V."/>
            <person name="Smith D.R."/>
        </authorList>
    </citation>
    <scope>NUCLEOTIDE SEQUENCE [LARGE SCALE GENOMIC DNA]</scope>
    <source>
        <strain>ATCC 824 / DSM 792 / JCM 1419 / IAM 19013 / LMG 5710 / NBRC 13948 / NRRL B-527 / VKM B-1787 / 2291 / W</strain>
    </source>
</reference>
<organism>
    <name type="scientific">Clostridium acetobutylicum (strain ATCC 824 / DSM 792 / JCM 1419 / IAM 19013 / LMG 5710 / NBRC 13948 / NRRL B-527 / VKM B-1787 / 2291 / W)</name>
    <dbReference type="NCBI Taxonomy" id="272562"/>
    <lineage>
        <taxon>Bacteria</taxon>
        <taxon>Bacillati</taxon>
        <taxon>Bacillota</taxon>
        <taxon>Clostridia</taxon>
        <taxon>Eubacteriales</taxon>
        <taxon>Clostridiaceae</taxon>
        <taxon>Clostridium</taxon>
    </lineage>
</organism>
<feature type="chain" id="PRO_0000157193" description="Putative septation protein SpoVG">
    <location>
        <begin position="1"/>
        <end position="95"/>
    </location>
</feature>
<keyword id="KW-0131">Cell cycle</keyword>
<keyword id="KW-0132">Cell division</keyword>
<keyword id="KW-1185">Reference proteome</keyword>
<keyword id="KW-0717">Septation</keyword>
<evidence type="ECO:0000255" key="1">
    <source>
        <dbReference type="HAMAP-Rule" id="MF_00819"/>
    </source>
</evidence>
<dbReference type="EMBL" id="AE001437">
    <property type="protein sequence ID" value="AAK81159.1"/>
    <property type="molecule type" value="Genomic_DNA"/>
</dbReference>
<dbReference type="PIR" id="D97296">
    <property type="entry name" value="D97296"/>
</dbReference>
<dbReference type="RefSeq" id="NP_349819.1">
    <property type="nucleotide sequence ID" value="NC_003030.1"/>
</dbReference>
<dbReference type="RefSeq" id="WP_010966499.1">
    <property type="nucleotide sequence ID" value="NC_003030.1"/>
</dbReference>
<dbReference type="SMR" id="Q97E91"/>
<dbReference type="STRING" id="272562.CA_C3223"/>
<dbReference type="GeneID" id="44999719"/>
<dbReference type="KEGG" id="cac:CA_C3223"/>
<dbReference type="PATRIC" id="fig|272562.8.peg.3402"/>
<dbReference type="eggNOG" id="COG2088">
    <property type="taxonomic scope" value="Bacteria"/>
</dbReference>
<dbReference type="HOGENOM" id="CLU_103669_2_1_9"/>
<dbReference type="OrthoDB" id="9796286at2"/>
<dbReference type="Proteomes" id="UP000000814">
    <property type="component" value="Chromosome"/>
</dbReference>
<dbReference type="GO" id="GO:0000917">
    <property type="term" value="P:division septum assembly"/>
    <property type="evidence" value="ECO:0007669"/>
    <property type="project" value="UniProtKB-KW"/>
</dbReference>
<dbReference type="GO" id="GO:0030435">
    <property type="term" value="P:sporulation resulting in formation of a cellular spore"/>
    <property type="evidence" value="ECO:0007669"/>
    <property type="project" value="InterPro"/>
</dbReference>
<dbReference type="Gene3D" id="3.30.1120.40">
    <property type="entry name" value="Stage V sporulation protein G"/>
    <property type="match status" value="1"/>
</dbReference>
<dbReference type="HAMAP" id="MF_00819">
    <property type="entry name" value="SpoVG"/>
    <property type="match status" value="1"/>
</dbReference>
<dbReference type="InterPro" id="IPR007170">
    <property type="entry name" value="SpoVG"/>
</dbReference>
<dbReference type="InterPro" id="IPR036751">
    <property type="entry name" value="SpoVG_sf"/>
</dbReference>
<dbReference type="NCBIfam" id="NF009749">
    <property type="entry name" value="PRK13259.1"/>
    <property type="match status" value="1"/>
</dbReference>
<dbReference type="PANTHER" id="PTHR38429">
    <property type="entry name" value="SEPTATION PROTEIN SPOVG-RELATED"/>
    <property type="match status" value="1"/>
</dbReference>
<dbReference type="PANTHER" id="PTHR38429:SF1">
    <property type="entry name" value="SEPTATION PROTEIN SPOVG-RELATED"/>
    <property type="match status" value="1"/>
</dbReference>
<dbReference type="Pfam" id="PF04026">
    <property type="entry name" value="SpoVG"/>
    <property type="match status" value="1"/>
</dbReference>
<dbReference type="SUPFAM" id="SSF160537">
    <property type="entry name" value="SpoVG-like"/>
    <property type="match status" value="1"/>
</dbReference>
<gene>
    <name evidence="1" type="primary">spoVG</name>
    <name type="ordered locus">CA_C3223</name>
</gene>
<proteinExistence type="inferred from homology"/>